<reference key="1">
    <citation type="journal article" date="2010" name="J. Proteome Res.">
        <title>Molecular diversification of peptide toxins from the tarantula Haplopelma hainanum (Ornithoctonus hainana) venom based on transcriptomic, peptidomic, and genomic analyses.</title>
        <authorList>
            <person name="Tang X."/>
            <person name="Zhang Y."/>
            <person name="Hu W."/>
            <person name="Xu D."/>
            <person name="Tao H."/>
            <person name="Yang X."/>
            <person name="Li Y."/>
            <person name="Jiang L."/>
            <person name="Liang S."/>
        </authorList>
    </citation>
    <scope>NUCLEOTIDE SEQUENCE [LARGE SCALE MRNA]</scope>
    <source>
        <tissue>Venom gland</tissue>
    </source>
</reference>
<evidence type="ECO:0000250" key="1"/>
<evidence type="ECO:0000250" key="2">
    <source>
        <dbReference type="UniProtKB" id="P68425"/>
    </source>
</evidence>
<evidence type="ECO:0000255" key="3"/>
<evidence type="ECO:0000255" key="4">
    <source>
        <dbReference type="PROSITE-ProRule" id="PRU00031"/>
    </source>
</evidence>
<evidence type="ECO:0000305" key="5"/>
<evidence type="ECO:0000305" key="6">
    <source>
    </source>
</evidence>
<proteinExistence type="inferred from homology"/>
<keyword id="KW-1015">Disulfide bond</keyword>
<keyword id="KW-0646">Protease inhibitor</keyword>
<keyword id="KW-0964">Secreted</keyword>
<keyword id="KW-0722">Serine protease inhibitor</keyword>
<keyword id="KW-0732">Signal</keyword>
<accession>D2Y2F9</accession>
<dbReference type="EMBL" id="GU293036">
    <property type="protein sequence ID" value="ADB56852.1"/>
    <property type="molecule type" value="mRNA"/>
</dbReference>
<dbReference type="SMR" id="D2Y2F9"/>
<dbReference type="ArachnoServer" id="AS001979">
    <property type="toxin name" value="U15-theraphotoxin-Hhn1h"/>
</dbReference>
<dbReference type="GO" id="GO:0005576">
    <property type="term" value="C:extracellular region"/>
    <property type="evidence" value="ECO:0007669"/>
    <property type="project" value="UniProtKB-SubCell"/>
</dbReference>
<dbReference type="GO" id="GO:0015459">
    <property type="term" value="F:potassium channel regulator activity"/>
    <property type="evidence" value="ECO:0007669"/>
    <property type="project" value="UniProtKB-KW"/>
</dbReference>
<dbReference type="GO" id="GO:0004867">
    <property type="term" value="F:serine-type endopeptidase inhibitor activity"/>
    <property type="evidence" value="ECO:0007669"/>
    <property type="project" value="UniProtKB-KW"/>
</dbReference>
<dbReference type="GO" id="GO:0090729">
    <property type="term" value="F:toxin activity"/>
    <property type="evidence" value="ECO:0007669"/>
    <property type="project" value="UniProtKB-KW"/>
</dbReference>
<dbReference type="GO" id="GO:0044562">
    <property type="term" value="P:envenomation resulting in negative regulation of voltage-gated potassium channel activity in another organism"/>
    <property type="evidence" value="ECO:0007669"/>
    <property type="project" value="UniProtKB-ARBA"/>
</dbReference>
<dbReference type="CDD" id="cd22598">
    <property type="entry name" value="Kunitz_huwentoxin"/>
    <property type="match status" value="1"/>
</dbReference>
<dbReference type="FunFam" id="4.10.410.10:FF:000020">
    <property type="entry name" value="Collagen, type VI, alpha 3"/>
    <property type="match status" value="1"/>
</dbReference>
<dbReference type="Gene3D" id="4.10.410.10">
    <property type="entry name" value="Pancreatic trypsin inhibitor Kunitz domain"/>
    <property type="match status" value="1"/>
</dbReference>
<dbReference type="InterPro" id="IPR002223">
    <property type="entry name" value="Kunitz_BPTI"/>
</dbReference>
<dbReference type="InterPro" id="IPR036880">
    <property type="entry name" value="Kunitz_BPTI_sf"/>
</dbReference>
<dbReference type="InterPro" id="IPR051388">
    <property type="entry name" value="Serpin_venom_toxin"/>
</dbReference>
<dbReference type="PANTHER" id="PTHR46751">
    <property type="entry name" value="EPPIN"/>
    <property type="match status" value="1"/>
</dbReference>
<dbReference type="PANTHER" id="PTHR46751:SF1">
    <property type="entry name" value="WAP FOUR-DISULFIDE CORE DOMAIN PROTEIN 6A"/>
    <property type="match status" value="1"/>
</dbReference>
<dbReference type="Pfam" id="PF00014">
    <property type="entry name" value="Kunitz_BPTI"/>
    <property type="match status" value="1"/>
</dbReference>
<dbReference type="PRINTS" id="PR00759">
    <property type="entry name" value="BASICPTASE"/>
</dbReference>
<dbReference type="SMART" id="SM00131">
    <property type="entry name" value="KU"/>
    <property type="match status" value="1"/>
</dbReference>
<dbReference type="SUPFAM" id="SSF57362">
    <property type="entry name" value="BPTI-like"/>
    <property type="match status" value="1"/>
</dbReference>
<dbReference type="PROSITE" id="PS50279">
    <property type="entry name" value="BPTI_KUNITZ_2"/>
    <property type="match status" value="1"/>
</dbReference>
<protein>
    <recommendedName>
        <fullName>Kunitz-type U15-theraphotoxin-Hhn1h</fullName>
        <shortName>U15-TRTX-Hhn1h</shortName>
    </recommendedName>
    <alternativeName>
        <fullName>Kunitz-type serine protease inhibitor hainantoxin-XI-8</fullName>
        <shortName>HNTX-XI-8</shortName>
    </alternativeName>
</protein>
<sequence>MGTARFLRAVLLLSVLLMVTFPALLSAEHHDGRVDICRLPSGSGDCLRFFEMWYFDGTTCTKFVYGGYGGNDNRFPTEKACMKRCAKA</sequence>
<comment type="function">
    <text evidence="2">Serine protease inhibitor that inhibits trypsin at a molar ratio of 1:1.</text>
</comment>
<comment type="subcellular location">
    <subcellularLocation>
        <location evidence="6">Secreted</location>
    </subcellularLocation>
</comment>
<comment type="tissue specificity">
    <text evidence="6">Expressed by the venom gland.</text>
</comment>
<comment type="similarity">
    <text evidence="5">Belongs to the venom Kunitz-type family. 03 (sub-Kunitz) subfamily.</text>
</comment>
<name>VKTH1_CYRHA</name>
<feature type="signal peptide" evidence="3">
    <location>
        <begin position="1"/>
        <end position="27"/>
    </location>
</feature>
<feature type="propeptide" id="PRO_0000400992" evidence="1">
    <location>
        <begin position="28"/>
        <end position="33"/>
    </location>
</feature>
<feature type="peptide" id="PRO_0000400993" description="Kunitz-type U15-theraphotoxin-Hhn1h">
    <location>
        <begin position="34"/>
        <end position="88"/>
    </location>
</feature>
<feature type="domain" description="BPTI/Kunitz inhibitor" evidence="4">
    <location>
        <begin position="37"/>
        <end position="85"/>
    </location>
</feature>
<feature type="site" description="Reactive bond for chymotrypsin" evidence="1">
    <location>
        <begin position="47"/>
        <end position="48"/>
    </location>
</feature>
<feature type="disulfide bond" evidence="4">
    <location>
        <begin position="37"/>
        <end position="85"/>
    </location>
</feature>
<feature type="disulfide bond" evidence="4">
    <location>
        <begin position="60"/>
        <end position="81"/>
    </location>
</feature>
<organism>
    <name type="scientific">Cyriopagopus hainanus</name>
    <name type="common">Chinese bird spider</name>
    <name type="synonym">Haplopelma hainanum</name>
    <dbReference type="NCBI Taxonomy" id="209901"/>
    <lineage>
        <taxon>Eukaryota</taxon>
        <taxon>Metazoa</taxon>
        <taxon>Ecdysozoa</taxon>
        <taxon>Arthropoda</taxon>
        <taxon>Chelicerata</taxon>
        <taxon>Arachnida</taxon>
        <taxon>Araneae</taxon>
        <taxon>Mygalomorphae</taxon>
        <taxon>Theraphosidae</taxon>
        <taxon>Haplopelma</taxon>
    </lineage>
</organism>